<dbReference type="EC" id="2.1.1.11"/>
<dbReference type="EMBL" id="Z11165">
    <property type="protein sequence ID" value="CAA77522.1"/>
    <property type="molecule type" value="Genomic_DNA"/>
</dbReference>
<dbReference type="EMBL" id="K01183">
    <property type="status" value="NOT_ANNOTATED_CDS"/>
    <property type="molecule type" value="Genomic_DNA"/>
</dbReference>
<dbReference type="EMBL" id="M34843">
    <property type="status" value="NOT_ANNOTATED_CDS"/>
    <property type="molecule type" value="Genomic_DNA"/>
</dbReference>
<dbReference type="PIR" id="A28988">
    <property type="entry name" value="A28988"/>
</dbReference>
<dbReference type="RefSeq" id="WP_013066405.1">
    <property type="nucleotide sequence ID" value="NZ_VIBE01000010.1"/>
</dbReference>
<dbReference type="SMR" id="P26236"/>
<dbReference type="IntAct" id="P26236">
    <property type="interactions" value="1"/>
</dbReference>
<dbReference type="MINT" id="P26236"/>
<dbReference type="GeneID" id="31489607"/>
<dbReference type="OMA" id="WNRIYSE"/>
<dbReference type="BRENDA" id="2.1.1.11">
    <property type="organism ID" value="5381"/>
</dbReference>
<dbReference type="UniPathway" id="UPA00671"/>
<dbReference type="GO" id="GO:0046406">
    <property type="term" value="F:magnesium protoporphyrin IX methyltransferase activity"/>
    <property type="evidence" value="ECO:0007669"/>
    <property type="project" value="UniProtKB-EC"/>
</dbReference>
<dbReference type="GO" id="GO:0030494">
    <property type="term" value="P:bacteriochlorophyll biosynthetic process"/>
    <property type="evidence" value="ECO:0000315"/>
    <property type="project" value="CACAO"/>
</dbReference>
<dbReference type="GO" id="GO:0036070">
    <property type="term" value="P:light-independent bacteriochlorophyll biosynthetic process"/>
    <property type="evidence" value="ECO:0007669"/>
    <property type="project" value="UniProtKB-UniPathway"/>
</dbReference>
<dbReference type="GO" id="GO:0032259">
    <property type="term" value="P:methylation"/>
    <property type="evidence" value="ECO:0007669"/>
    <property type="project" value="UniProtKB-KW"/>
</dbReference>
<dbReference type="GO" id="GO:0015979">
    <property type="term" value="P:photosynthesis"/>
    <property type="evidence" value="ECO:0007669"/>
    <property type="project" value="UniProtKB-KW"/>
</dbReference>
<dbReference type="CDD" id="cd02440">
    <property type="entry name" value="AdoMet_MTases"/>
    <property type="match status" value="1"/>
</dbReference>
<dbReference type="Gene3D" id="3.40.50.150">
    <property type="entry name" value="Vaccinia Virus protein VP39"/>
    <property type="match status" value="1"/>
</dbReference>
<dbReference type="InterPro" id="IPR010251">
    <property type="entry name" value="Mg_prot_MeTrfase"/>
</dbReference>
<dbReference type="InterPro" id="IPR010940">
    <property type="entry name" value="Mg_prot_MeTrfase_C"/>
</dbReference>
<dbReference type="InterPro" id="IPR029063">
    <property type="entry name" value="SAM-dependent_MTases_sf"/>
</dbReference>
<dbReference type="InterPro" id="IPR007848">
    <property type="entry name" value="Small_mtfrase_dom"/>
</dbReference>
<dbReference type="NCBIfam" id="TIGR02021">
    <property type="entry name" value="BchM-ChlM"/>
    <property type="match status" value="1"/>
</dbReference>
<dbReference type="PANTHER" id="PTHR43464">
    <property type="entry name" value="METHYLTRANSFERASE"/>
    <property type="match status" value="1"/>
</dbReference>
<dbReference type="PANTHER" id="PTHR43464:SF19">
    <property type="entry name" value="UBIQUINONE BIOSYNTHESIS O-METHYLTRANSFERASE, MITOCHONDRIAL"/>
    <property type="match status" value="1"/>
</dbReference>
<dbReference type="Pfam" id="PF07109">
    <property type="entry name" value="Mg-por_mtran_C"/>
    <property type="match status" value="1"/>
</dbReference>
<dbReference type="Pfam" id="PF05175">
    <property type="entry name" value="MTS"/>
    <property type="match status" value="1"/>
</dbReference>
<dbReference type="SUPFAM" id="SSF53335">
    <property type="entry name" value="S-adenosyl-L-methionine-dependent methyltransferases"/>
    <property type="match status" value="1"/>
</dbReference>
<dbReference type="PROSITE" id="PS51556">
    <property type="entry name" value="SAM_MT_MG_PIX"/>
    <property type="match status" value="1"/>
</dbReference>
<reference key="1">
    <citation type="journal article" date="1984" name="Cell">
        <title>Nucleotide and deduced polypeptide sequences of the photosynthetic reaction-center, B870 antenna, and flanking polypeptides from R. capsulata.</title>
        <authorList>
            <person name="Youvan D.C."/>
            <person name="Bylina E.J."/>
            <person name="Alberti M."/>
            <person name="Begusch H."/>
            <person name="Hearst J.E."/>
        </authorList>
    </citation>
    <scope>NUCLEOTIDE SEQUENCE [GENOMIC DNA]</scope>
</reference>
<reference key="2">
    <citation type="journal article" date="1990" name="J. Bacteriol.">
        <title>Rhodobacter capsulatus genes involved in early steps of the bacteriochlorophyll biosynthetic pathway.</title>
        <authorList>
            <person name="Yang Z.M."/>
            <person name="Bauer C.E."/>
        </authorList>
    </citation>
    <scope>NUCLEOTIDE SEQUENCE [GENOMIC DNA] OF 1-19</scope>
</reference>
<reference key="3">
    <citation type="journal article" date="1994" name="J. Bacteriol.">
        <title>Heterologous expression of the bchM gene product from Rhodobacter capsulatus and demonstration that it encodes S-adenosyl-L-methionine:Mg-protoporphyrin IX methyltransferase.</title>
        <authorList>
            <person name="Bollivar D.W."/>
            <person name="Jiang Z.Y."/>
            <person name="Bauer C.E."/>
            <person name="Beale S.I."/>
        </authorList>
    </citation>
    <scope>CHARACTERIZATION</scope>
</reference>
<evidence type="ECO:0000255" key="1">
    <source>
        <dbReference type="PROSITE-ProRule" id="PRU00889"/>
    </source>
</evidence>
<evidence type="ECO:0000305" key="2">
    <source>
    </source>
</evidence>
<sequence>MPSDYAEIRNRVEHYFDRTATRAWARLTTADEKVSKVRQTVREGRDTMRAVMLSRLPDDLTGCRVMDAGCGTGLTTVELARRGADVVAVDISPQLIDIAKDRLPPELRGKVSFHVGDMADPALGQFDYVVAMDSLIYYRAPDIGRVLTELGKRTHSAIVFTVAPKTAFLMAFWWLGKLFPRSNRSPVMIPHALDKLQRHAGDSLIKIDRVARGFYISECLEYRP</sequence>
<gene>
    <name type="primary">bchM</name>
</gene>
<feature type="chain" id="PRO_0000204420" description="Magnesium-protoporphyrin O-methyltransferase">
    <location>
        <begin position="1"/>
        <end position="224"/>
    </location>
</feature>
<keyword id="KW-0077">Bacteriochlorophyll biosynthesis</keyword>
<keyword id="KW-0149">Chlorophyll biosynthesis</keyword>
<keyword id="KW-0489">Methyltransferase</keyword>
<keyword id="KW-0602">Photosynthesis</keyword>
<keyword id="KW-0949">S-adenosyl-L-methionine</keyword>
<keyword id="KW-0808">Transferase</keyword>
<name>BCHM_RHOCA</name>
<organism>
    <name type="scientific">Rhodobacter capsulatus</name>
    <name type="common">Rhodopseudomonas capsulata</name>
    <dbReference type="NCBI Taxonomy" id="1061"/>
    <lineage>
        <taxon>Bacteria</taxon>
        <taxon>Pseudomonadati</taxon>
        <taxon>Pseudomonadota</taxon>
        <taxon>Alphaproteobacteria</taxon>
        <taxon>Rhodobacterales</taxon>
        <taxon>Rhodobacter group</taxon>
        <taxon>Rhodobacter</taxon>
    </lineage>
</organism>
<accession>P26236</accession>
<comment type="function">
    <text>Converts Mg-protoporphyrin IX to Mg-protoporphyrin IX methylester using S-adenosyl-L-methionine as a cofactor.</text>
</comment>
<comment type="catalytic activity">
    <reaction evidence="1">
        <text>Mg-protoporphyrin IX + S-adenosyl-L-methionine = Mg-protoporphyrin IX 13-monomethyl ester + S-adenosyl-L-homocysteine</text>
        <dbReference type="Rhea" id="RHEA:17809"/>
        <dbReference type="ChEBI" id="CHEBI:57856"/>
        <dbReference type="ChEBI" id="CHEBI:59789"/>
        <dbReference type="ChEBI" id="CHEBI:60491"/>
        <dbReference type="ChEBI" id="CHEBI:60492"/>
        <dbReference type="EC" id="2.1.1.11"/>
    </reaction>
</comment>
<comment type="pathway">
    <text>Porphyrin-containing compound metabolism; bacteriochlorophyll biosynthesis (light-independent).</text>
</comment>
<comment type="similarity">
    <text evidence="1">Belongs to the class I-like SAM-binding methyltransferase superfamily. Magnesium protoporphyrin O-methyltransferase family.</text>
</comment>
<comment type="caution">
    <text evidence="2">Was originally thought to be involved in formation of the cyclopentone ring of protochlorophyllide from Mg-protoporphyrin IX monomethyl ester.</text>
</comment>
<proteinExistence type="evidence at protein level"/>
<protein>
    <recommendedName>
        <fullName>Magnesium-protoporphyrin O-methyltransferase</fullName>
        <ecNumber>2.1.1.11</ecNumber>
    </recommendedName>
    <alternativeName>
        <fullName>Magnesium-protoporphyrin IX methyltransferase</fullName>
    </alternativeName>
</protein>